<name>A4AS1_HUMAN</name>
<gene>
    <name type="primary">ADAMTSL4-AS1</name>
    <name type="synonym">C1orf138</name>
</gene>
<protein>
    <recommendedName>
        <fullName>Uncharacterized protein ADAMTSL4-AS1</fullName>
    </recommendedName>
    <alternativeName>
        <fullName>ADAMTSL4 antisense RNA 1</fullName>
    </alternativeName>
    <alternativeName>
        <fullName>ADAMTSL4 antisense gene protein 1</fullName>
    </alternativeName>
</protein>
<evidence type="ECO:0000256" key="1">
    <source>
        <dbReference type="SAM" id="MobiDB-lite"/>
    </source>
</evidence>
<evidence type="ECO:0000305" key="2"/>
<feature type="chain" id="PRO_0000286610" description="Uncharacterized protein ADAMTSL4-AS1">
    <location>
        <begin position="1"/>
        <end position="129"/>
    </location>
</feature>
<feature type="region of interest" description="Disordered" evidence="1">
    <location>
        <begin position="1"/>
        <end position="129"/>
    </location>
</feature>
<feature type="compositionally biased region" description="Basic and acidic residues" evidence="1">
    <location>
        <begin position="87"/>
        <end position="100"/>
    </location>
</feature>
<feature type="compositionally biased region" description="Polar residues" evidence="1">
    <location>
        <begin position="119"/>
        <end position="129"/>
    </location>
</feature>
<feature type="sequence conflict" description="In Ref. 1; BAC87085." evidence="2" ref="1">
    <original>A</original>
    <variation>V</variation>
    <location>
        <position position="16"/>
    </location>
</feature>
<feature type="sequence conflict" description="In Ref. 1; BAC87085." evidence="2" ref="1">
    <original>K</original>
    <variation>R</variation>
    <location>
        <position position="71"/>
    </location>
</feature>
<dbReference type="EMBL" id="AK127688">
    <property type="protein sequence ID" value="BAC87085.1"/>
    <property type="molecule type" value="mRNA"/>
</dbReference>
<dbReference type="EMBL" id="AL356356">
    <property type="status" value="NOT_ANNOTATED_CDS"/>
    <property type="molecule type" value="Genomic_DNA"/>
</dbReference>
<dbReference type="EMBL" id="BC132990">
    <property type="status" value="NOT_ANNOTATED_CDS"/>
    <property type="molecule type" value="mRNA"/>
</dbReference>
<dbReference type="EMBL" id="BC132992">
    <property type="protein sequence ID" value="AAI32993.1"/>
    <property type="molecule type" value="mRNA"/>
</dbReference>
<dbReference type="BioMuta" id="HGNC:32041"/>
<dbReference type="DMDM" id="74745067"/>
<dbReference type="MassIVE" id="Q5T5F5"/>
<dbReference type="AGR" id="HGNC:32041"/>
<dbReference type="GeneCards" id="ADAMTSL4-AS1"/>
<dbReference type="HGNC" id="HGNC:32041">
    <property type="gene designation" value="ADAMTSL4-AS1"/>
</dbReference>
<dbReference type="neXtProt" id="NX_Q5T5F5"/>
<dbReference type="InParanoid" id="Q5T5F5"/>
<dbReference type="PAN-GO" id="Q5T5F5">
    <property type="GO annotations" value="0 GO annotations based on evolutionary models"/>
</dbReference>
<dbReference type="PhylomeDB" id="Q5T5F5"/>
<dbReference type="TreeFam" id="TF351534"/>
<dbReference type="ChiTaRS" id="ADAMTSL4-AS1">
    <property type="organism name" value="human"/>
</dbReference>
<dbReference type="Pharos" id="Q5T5F5">
    <property type="development level" value="Tdark"/>
</dbReference>
<dbReference type="PRO" id="PR:Q5T5F5"/>
<dbReference type="Proteomes" id="UP000005640">
    <property type="component" value="Unplaced"/>
</dbReference>
<dbReference type="RNAct" id="Q5T5F5">
    <property type="molecule type" value="protein"/>
</dbReference>
<accession>Q5T5F5</accession>
<accession>Q6ZS69</accession>
<keyword id="KW-1185">Reference proteome</keyword>
<sequence>MWLWQDIQCCPAPPSAPPRALEPGRAPPPPGEGLGAGIPSLSPPQKKPQSVGICVRQKGRQKAGLEKGNRKKELRQANCPSLRPQRKGADTRRLPRETRPTKKRTAAAQPFLQLWNPAPHTSNGRTGDL</sequence>
<organism>
    <name type="scientific">Homo sapiens</name>
    <name type="common">Human</name>
    <dbReference type="NCBI Taxonomy" id="9606"/>
    <lineage>
        <taxon>Eukaryota</taxon>
        <taxon>Metazoa</taxon>
        <taxon>Chordata</taxon>
        <taxon>Craniata</taxon>
        <taxon>Vertebrata</taxon>
        <taxon>Euteleostomi</taxon>
        <taxon>Mammalia</taxon>
        <taxon>Eutheria</taxon>
        <taxon>Euarchontoglires</taxon>
        <taxon>Primates</taxon>
        <taxon>Haplorrhini</taxon>
        <taxon>Catarrhini</taxon>
        <taxon>Hominidae</taxon>
        <taxon>Homo</taxon>
    </lineage>
</organism>
<reference key="1">
    <citation type="journal article" date="2004" name="Nat. Genet.">
        <title>Complete sequencing and characterization of 21,243 full-length human cDNAs.</title>
        <authorList>
            <person name="Ota T."/>
            <person name="Suzuki Y."/>
            <person name="Nishikawa T."/>
            <person name="Otsuki T."/>
            <person name="Sugiyama T."/>
            <person name="Irie R."/>
            <person name="Wakamatsu A."/>
            <person name="Hayashi K."/>
            <person name="Sato H."/>
            <person name="Nagai K."/>
            <person name="Kimura K."/>
            <person name="Makita H."/>
            <person name="Sekine M."/>
            <person name="Obayashi M."/>
            <person name="Nishi T."/>
            <person name="Shibahara T."/>
            <person name="Tanaka T."/>
            <person name="Ishii S."/>
            <person name="Yamamoto J."/>
            <person name="Saito K."/>
            <person name="Kawai Y."/>
            <person name="Isono Y."/>
            <person name="Nakamura Y."/>
            <person name="Nagahari K."/>
            <person name="Murakami K."/>
            <person name="Yasuda T."/>
            <person name="Iwayanagi T."/>
            <person name="Wagatsuma M."/>
            <person name="Shiratori A."/>
            <person name="Sudo H."/>
            <person name="Hosoiri T."/>
            <person name="Kaku Y."/>
            <person name="Kodaira H."/>
            <person name="Kondo H."/>
            <person name="Sugawara M."/>
            <person name="Takahashi M."/>
            <person name="Kanda K."/>
            <person name="Yokoi T."/>
            <person name="Furuya T."/>
            <person name="Kikkawa E."/>
            <person name="Omura Y."/>
            <person name="Abe K."/>
            <person name="Kamihara K."/>
            <person name="Katsuta N."/>
            <person name="Sato K."/>
            <person name="Tanikawa M."/>
            <person name="Yamazaki M."/>
            <person name="Ninomiya K."/>
            <person name="Ishibashi T."/>
            <person name="Yamashita H."/>
            <person name="Murakawa K."/>
            <person name="Fujimori K."/>
            <person name="Tanai H."/>
            <person name="Kimata M."/>
            <person name="Watanabe M."/>
            <person name="Hiraoka S."/>
            <person name="Chiba Y."/>
            <person name="Ishida S."/>
            <person name="Ono Y."/>
            <person name="Takiguchi S."/>
            <person name="Watanabe S."/>
            <person name="Yosida M."/>
            <person name="Hotuta T."/>
            <person name="Kusano J."/>
            <person name="Kanehori K."/>
            <person name="Takahashi-Fujii A."/>
            <person name="Hara H."/>
            <person name="Tanase T.-O."/>
            <person name="Nomura Y."/>
            <person name="Togiya S."/>
            <person name="Komai F."/>
            <person name="Hara R."/>
            <person name="Takeuchi K."/>
            <person name="Arita M."/>
            <person name="Imose N."/>
            <person name="Musashino K."/>
            <person name="Yuuki H."/>
            <person name="Oshima A."/>
            <person name="Sasaki N."/>
            <person name="Aotsuka S."/>
            <person name="Yoshikawa Y."/>
            <person name="Matsunawa H."/>
            <person name="Ichihara T."/>
            <person name="Shiohata N."/>
            <person name="Sano S."/>
            <person name="Moriya S."/>
            <person name="Momiyama H."/>
            <person name="Satoh N."/>
            <person name="Takami S."/>
            <person name="Terashima Y."/>
            <person name="Suzuki O."/>
            <person name="Nakagawa S."/>
            <person name="Senoh A."/>
            <person name="Mizoguchi H."/>
            <person name="Goto Y."/>
            <person name="Shimizu F."/>
            <person name="Wakebe H."/>
            <person name="Hishigaki H."/>
            <person name="Watanabe T."/>
            <person name="Sugiyama A."/>
            <person name="Takemoto M."/>
            <person name="Kawakami B."/>
            <person name="Yamazaki M."/>
            <person name="Watanabe K."/>
            <person name="Kumagai A."/>
            <person name="Itakura S."/>
            <person name="Fukuzumi Y."/>
            <person name="Fujimori Y."/>
            <person name="Komiyama M."/>
            <person name="Tashiro H."/>
            <person name="Tanigami A."/>
            <person name="Fujiwara T."/>
            <person name="Ono T."/>
            <person name="Yamada K."/>
            <person name="Fujii Y."/>
            <person name="Ozaki K."/>
            <person name="Hirao M."/>
            <person name="Ohmori Y."/>
            <person name="Kawabata A."/>
            <person name="Hikiji T."/>
            <person name="Kobatake N."/>
            <person name="Inagaki H."/>
            <person name="Ikema Y."/>
            <person name="Okamoto S."/>
            <person name="Okitani R."/>
            <person name="Kawakami T."/>
            <person name="Noguchi S."/>
            <person name="Itoh T."/>
            <person name="Shigeta K."/>
            <person name="Senba T."/>
            <person name="Matsumura K."/>
            <person name="Nakajima Y."/>
            <person name="Mizuno T."/>
            <person name="Morinaga M."/>
            <person name="Sasaki M."/>
            <person name="Togashi T."/>
            <person name="Oyama M."/>
            <person name="Hata H."/>
            <person name="Watanabe M."/>
            <person name="Komatsu T."/>
            <person name="Mizushima-Sugano J."/>
            <person name="Satoh T."/>
            <person name="Shirai Y."/>
            <person name="Takahashi Y."/>
            <person name="Nakagawa K."/>
            <person name="Okumura K."/>
            <person name="Nagase T."/>
            <person name="Nomura N."/>
            <person name="Kikuchi H."/>
            <person name="Masuho Y."/>
            <person name="Yamashita R."/>
            <person name="Nakai K."/>
            <person name="Yada T."/>
            <person name="Nakamura Y."/>
            <person name="Ohara O."/>
            <person name="Isogai T."/>
            <person name="Sugano S."/>
        </authorList>
    </citation>
    <scope>NUCLEOTIDE SEQUENCE [LARGE SCALE MRNA]</scope>
</reference>
<reference key="2">
    <citation type="journal article" date="2006" name="Nature">
        <title>The DNA sequence and biological annotation of human chromosome 1.</title>
        <authorList>
            <person name="Gregory S.G."/>
            <person name="Barlow K.F."/>
            <person name="McLay K.E."/>
            <person name="Kaul R."/>
            <person name="Swarbreck D."/>
            <person name="Dunham A."/>
            <person name="Scott C.E."/>
            <person name="Howe K.L."/>
            <person name="Woodfine K."/>
            <person name="Spencer C.C.A."/>
            <person name="Jones M.C."/>
            <person name="Gillson C."/>
            <person name="Searle S."/>
            <person name="Zhou Y."/>
            <person name="Kokocinski F."/>
            <person name="McDonald L."/>
            <person name="Evans R."/>
            <person name="Phillips K."/>
            <person name="Atkinson A."/>
            <person name="Cooper R."/>
            <person name="Jones C."/>
            <person name="Hall R.E."/>
            <person name="Andrews T.D."/>
            <person name="Lloyd C."/>
            <person name="Ainscough R."/>
            <person name="Almeida J.P."/>
            <person name="Ambrose K.D."/>
            <person name="Anderson F."/>
            <person name="Andrew R.W."/>
            <person name="Ashwell R.I.S."/>
            <person name="Aubin K."/>
            <person name="Babbage A.K."/>
            <person name="Bagguley C.L."/>
            <person name="Bailey J."/>
            <person name="Beasley H."/>
            <person name="Bethel G."/>
            <person name="Bird C.P."/>
            <person name="Bray-Allen S."/>
            <person name="Brown J.Y."/>
            <person name="Brown A.J."/>
            <person name="Buckley D."/>
            <person name="Burton J."/>
            <person name="Bye J."/>
            <person name="Carder C."/>
            <person name="Chapman J.C."/>
            <person name="Clark S.Y."/>
            <person name="Clarke G."/>
            <person name="Clee C."/>
            <person name="Cobley V."/>
            <person name="Collier R.E."/>
            <person name="Corby N."/>
            <person name="Coville G.J."/>
            <person name="Davies J."/>
            <person name="Deadman R."/>
            <person name="Dunn M."/>
            <person name="Earthrowl M."/>
            <person name="Ellington A.G."/>
            <person name="Errington H."/>
            <person name="Frankish A."/>
            <person name="Frankland J."/>
            <person name="French L."/>
            <person name="Garner P."/>
            <person name="Garnett J."/>
            <person name="Gay L."/>
            <person name="Ghori M.R.J."/>
            <person name="Gibson R."/>
            <person name="Gilby L.M."/>
            <person name="Gillett W."/>
            <person name="Glithero R.J."/>
            <person name="Grafham D.V."/>
            <person name="Griffiths C."/>
            <person name="Griffiths-Jones S."/>
            <person name="Grocock R."/>
            <person name="Hammond S."/>
            <person name="Harrison E.S.I."/>
            <person name="Hart E."/>
            <person name="Haugen E."/>
            <person name="Heath P.D."/>
            <person name="Holmes S."/>
            <person name="Holt K."/>
            <person name="Howden P.J."/>
            <person name="Hunt A.R."/>
            <person name="Hunt S.E."/>
            <person name="Hunter G."/>
            <person name="Isherwood J."/>
            <person name="James R."/>
            <person name="Johnson C."/>
            <person name="Johnson D."/>
            <person name="Joy A."/>
            <person name="Kay M."/>
            <person name="Kershaw J.K."/>
            <person name="Kibukawa M."/>
            <person name="Kimberley A.M."/>
            <person name="King A."/>
            <person name="Knights A.J."/>
            <person name="Lad H."/>
            <person name="Laird G."/>
            <person name="Lawlor S."/>
            <person name="Leongamornlert D.A."/>
            <person name="Lloyd D.M."/>
            <person name="Loveland J."/>
            <person name="Lovell J."/>
            <person name="Lush M.J."/>
            <person name="Lyne R."/>
            <person name="Martin S."/>
            <person name="Mashreghi-Mohammadi M."/>
            <person name="Matthews L."/>
            <person name="Matthews N.S.W."/>
            <person name="McLaren S."/>
            <person name="Milne S."/>
            <person name="Mistry S."/>
            <person name="Moore M.J.F."/>
            <person name="Nickerson T."/>
            <person name="O'Dell C.N."/>
            <person name="Oliver K."/>
            <person name="Palmeiri A."/>
            <person name="Palmer S.A."/>
            <person name="Parker A."/>
            <person name="Patel D."/>
            <person name="Pearce A.V."/>
            <person name="Peck A.I."/>
            <person name="Pelan S."/>
            <person name="Phelps K."/>
            <person name="Phillimore B.J."/>
            <person name="Plumb R."/>
            <person name="Rajan J."/>
            <person name="Raymond C."/>
            <person name="Rouse G."/>
            <person name="Saenphimmachak C."/>
            <person name="Sehra H.K."/>
            <person name="Sheridan E."/>
            <person name="Shownkeen R."/>
            <person name="Sims S."/>
            <person name="Skuce C.D."/>
            <person name="Smith M."/>
            <person name="Steward C."/>
            <person name="Subramanian S."/>
            <person name="Sycamore N."/>
            <person name="Tracey A."/>
            <person name="Tromans A."/>
            <person name="Van Helmond Z."/>
            <person name="Wall M."/>
            <person name="Wallis J.M."/>
            <person name="White S."/>
            <person name="Whitehead S.L."/>
            <person name="Wilkinson J.E."/>
            <person name="Willey D.L."/>
            <person name="Williams H."/>
            <person name="Wilming L."/>
            <person name="Wray P.W."/>
            <person name="Wu Z."/>
            <person name="Coulson A."/>
            <person name="Vaudin M."/>
            <person name="Sulston J.E."/>
            <person name="Durbin R.M."/>
            <person name="Hubbard T."/>
            <person name="Wooster R."/>
            <person name="Dunham I."/>
            <person name="Carter N.P."/>
            <person name="McVean G."/>
            <person name="Ross M.T."/>
            <person name="Harrow J."/>
            <person name="Olson M.V."/>
            <person name="Beck S."/>
            <person name="Rogers J."/>
            <person name="Bentley D.R."/>
        </authorList>
    </citation>
    <scope>NUCLEOTIDE SEQUENCE [LARGE SCALE GENOMIC DNA]</scope>
</reference>
<reference key="3">
    <citation type="journal article" date="2004" name="Genome Res.">
        <title>The status, quality, and expansion of the NIH full-length cDNA project: the Mammalian Gene Collection (MGC).</title>
        <authorList>
            <consortium name="The MGC Project Team"/>
        </authorList>
    </citation>
    <scope>NUCLEOTIDE SEQUENCE [LARGE SCALE MRNA]</scope>
</reference>
<proteinExistence type="evidence at transcript level"/>